<dbReference type="EMBL" id="CP000243">
    <property type="protein sequence ID" value="ABE10086.1"/>
    <property type="status" value="ALT_INIT"/>
    <property type="molecule type" value="Genomic_DNA"/>
</dbReference>
<dbReference type="RefSeq" id="WP_001317551.1">
    <property type="nucleotide sequence ID" value="NZ_CP064825.1"/>
</dbReference>
<dbReference type="KEGG" id="eci:UTI89_C4678"/>
<dbReference type="HOGENOM" id="CLU_157779_1_0_6"/>
<dbReference type="Proteomes" id="UP000001952">
    <property type="component" value="Chromosome"/>
</dbReference>
<dbReference type="GO" id="GO:0005886">
    <property type="term" value="C:plasma membrane"/>
    <property type="evidence" value="ECO:0007669"/>
    <property type="project" value="UniProtKB-SubCell"/>
</dbReference>
<dbReference type="InterPro" id="IPR031381">
    <property type="entry name" value="YtcA"/>
</dbReference>
<dbReference type="Pfam" id="PF17090">
    <property type="entry name" value="Ytca"/>
    <property type="match status" value="1"/>
</dbReference>
<dbReference type="PROSITE" id="PS51257">
    <property type="entry name" value="PROKAR_LIPOPROTEIN"/>
    <property type="match status" value="1"/>
</dbReference>
<sequence length="91" mass="10271">MPTVLSRMAMQLKKTAWIIPVFMVSGCSLSPAIPVIGAYYPGWFFCAIASLILTLITRRIIQRTNINLAFVGIIYTALFALYAMLFWLAFF</sequence>
<proteinExistence type="inferred from homology"/>
<comment type="subcellular location">
    <subcellularLocation>
        <location evidence="2">Cell membrane</location>
        <topology evidence="2">Lipid-anchor</topology>
    </subcellularLocation>
    <subcellularLocation>
        <location evidence="3">Membrane</location>
        <topology evidence="3">Multi-pass membrane protein</topology>
    </subcellularLocation>
</comment>
<comment type="similarity">
    <text evidence="3">Belongs to the YtcA family.</text>
</comment>
<comment type="sequence caution" evidence="3">
    <conflict type="erroneous initiation">
        <sequence resource="EMBL-CDS" id="ABE10086"/>
    </conflict>
</comment>
<feature type="signal peptide" evidence="2">
    <location>
        <begin position="1"/>
        <end position="26"/>
    </location>
</feature>
<feature type="chain" id="PRO_0000311872" description="Uncharacterized protein YtcA">
    <location>
        <begin position="27"/>
        <end position="91"/>
    </location>
</feature>
<feature type="transmembrane region" description="Helical" evidence="1">
    <location>
        <begin position="33"/>
        <end position="53"/>
    </location>
</feature>
<feature type="transmembrane region" description="Helical" evidence="1">
    <location>
        <begin position="70"/>
        <end position="90"/>
    </location>
</feature>
<feature type="lipid moiety-binding region" description="N-palmitoyl cysteine" evidence="2">
    <location>
        <position position="27"/>
    </location>
</feature>
<feature type="lipid moiety-binding region" description="S-diacylglycerol cysteine" evidence="2">
    <location>
        <position position="27"/>
    </location>
</feature>
<evidence type="ECO:0000255" key="1"/>
<evidence type="ECO:0000255" key="2">
    <source>
        <dbReference type="PROSITE-ProRule" id="PRU00303"/>
    </source>
</evidence>
<evidence type="ECO:0000305" key="3"/>
<organism>
    <name type="scientific">Escherichia coli (strain UTI89 / UPEC)</name>
    <dbReference type="NCBI Taxonomy" id="364106"/>
    <lineage>
        <taxon>Bacteria</taxon>
        <taxon>Pseudomonadati</taxon>
        <taxon>Pseudomonadota</taxon>
        <taxon>Gammaproteobacteria</taxon>
        <taxon>Enterobacterales</taxon>
        <taxon>Enterobacteriaceae</taxon>
        <taxon>Escherichia</taxon>
    </lineage>
</organism>
<name>YTCA_ECOUT</name>
<keyword id="KW-1003">Cell membrane</keyword>
<keyword id="KW-0449">Lipoprotein</keyword>
<keyword id="KW-0472">Membrane</keyword>
<keyword id="KW-0564">Palmitate</keyword>
<keyword id="KW-0732">Signal</keyword>
<keyword id="KW-0812">Transmembrane</keyword>
<keyword id="KW-1133">Transmembrane helix</keyword>
<reference key="1">
    <citation type="journal article" date="2006" name="Proc. Natl. Acad. Sci. U.S.A.">
        <title>Identification of genes subject to positive selection in uropathogenic strains of Escherichia coli: a comparative genomics approach.</title>
        <authorList>
            <person name="Chen S.L."/>
            <person name="Hung C.-S."/>
            <person name="Xu J."/>
            <person name="Reigstad C.S."/>
            <person name="Magrini V."/>
            <person name="Sabo A."/>
            <person name="Blasiar D."/>
            <person name="Bieri T."/>
            <person name="Meyer R.R."/>
            <person name="Ozersky P."/>
            <person name="Armstrong J.R."/>
            <person name="Fulton R.S."/>
            <person name="Latreille J.P."/>
            <person name="Spieth J."/>
            <person name="Hooton T.M."/>
            <person name="Mardis E.R."/>
            <person name="Hultgren S.J."/>
            <person name="Gordon J.I."/>
        </authorList>
    </citation>
    <scope>NUCLEOTIDE SEQUENCE [LARGE SCALE GENOMIC DNA]</scope>
    <source>
        <strain>UTI89 / UPEC</strain>
    </source>
</reference>
<protein>
    <recommendedName>
        <fullName>Uncharacterized protein YtcA</fullName>
    </recommendedName>
</protein>
<accession>Q1R3H8</accession>
<gene>
    <name type="primary">ytcA</name>
    <name type="ordered locus">UTI89_C4678</name>
</gene>